<comment type="subcellular location">
    <subcellularLocation>
        <location>Cytoplasm</location>
    </subcellularLocation>
    <subcellularLocation>
        <location evidence="1">Cell inner membrane</location>
        <topology evidence="1">Peripheral membrane protein</topology>
        <orientation evidence="1">Cytoplasmic side</orientation>
    </subcellularLocation>
</comment>
<comment type="similarity">
    <text evidence="1">Belongs to the HflD family.</text>
</comment>
<sequence length="208" mass="22730">MAKNYYDITLALAGICQSARLVQQLAHEGQCDNDALNTVLRGLLQTNPSSTLAVYGDTEQVLKMGLETLQSVLNANRQGEAAELTRYTLSLMVLERKLSASKSAMNTLGERISQLDRQLAHFDLESETMMSSLASIYVDVVSPLGPRIQVTGSPAILQSPLVQAKVRATLLAGIRSAVLWQQVGGSRLQLMFSRNRLFKQAQSILAHT</sequence>
<gene>
    <name evidence="1" type="primary">hflD</name>
    <name type="ordered locus">YPA_1887</name>
</gene>
<accession>Q1C6R9</accession>
<dbReference type="EMBL" id="CP000308">
    <property type="protein sequence ID" value="ABG13853.1"/>
    <property type="molecule type" value="Genomic_DNA"/>
</dbReference>
<dbReference type="RefSeq" id="WP_002210914.1">
    <property type="nucleotide sequence ID" value="NZ_CP009906.1"/>
</dbReference>
<dbReference type="SMR" id="Q1C6R9"/>
<dbReference type="GeneID" id="57976936"/>
<dbReference type="KEGG" id="ypa:YPA_1887"/>
<dbReference type="Proteomes" id="UP000001971">
    <property type="component" value="Chromosome"/>
</dbReference>
<dbReference type="GO" id="GO:0005737">
    <property type="term" value="C:cytoplasm"/>
    <property type="evidence" value="ECO:0007669"/>
    <property type="project" value="UniProtKB-SubCell"/>
</dbReference>
<dbReference type="GO" id="GO:0005886">
    <property type="term" value="C:plasma membrane"/>
    <property type="evidence" value="ECO:0007669"/>
    <property type="project" value="UniProtKB-SubCell"/>
</dbReference>
<dbReference type="FunFam" id="1.10.3890.10:FF:000001">
    <property type="entry name" value="High frequency lysogenization protein HflD homolog"/>
    <property type="match status" value="1"/>
</dbReference>
<dbReference type="Gene3D" id="1.10.3890.10">
    <property type="entry name" value="HflD-like"/>
    <property type="match status" value="1"/>
</dbReference>
<dbReference type="HAMAP" id="MF_00695">
    <property type="entry name" value="HflD_protein"/>
    <property type="match status" value="1"/>
</dbReference>
<dbReference type="InterPro" id="IPR007451">
    <property type="entry name" value="HflD"/>
</dbReference>
<dbReference type="InterPro" id="IPR035932">
    <property type="entry name" value="HflD-like_sf"/>
</dbReference>
<dbReference type="NCBIfam" id="NF001246">
    <property type="entry name" value="PRK00218.1-2"/>
    <property type="match status" value="1"/>
</dbReference>
<dbReference type="NCBIfam" id="NF001248">
    <property type="entry name" value="PRK00218.1-4"/>
    <property type="match status" value="1"/>
</dbReference>
<dbReference type="NCBIfam" id="NF001249">
    <property type="entry name" value="PRK00218.1-5"/>
    <property type="match status" value="1"/>
</dbReference>
<dbReference type="PANTHER" id="PTHR38100">
    <property type="entry name" value="HIGH FREQUENCY LYSOGENIZATION PROTEIN HFLD"/>
    <property type="match status" value="1"/>
</dbReference>
<dbReference type="PANTHER" id="PTHR38100:SF1">
    <property type="entry name" value="HIGH FREQUENCY LYSOGENIZATION PROTEIN HFLD"/>
    <property type="match status" value="1"/>
</dbReference>
<dbReference type="Pfam" id="PF04356">
    <property type="entry name" value="DUF489"/>
    <property type="match status" value="1"/>
</dbReference>
<dbReference type="SUPFAM" id="SSF101322">
    <property type="entry name" value="YcfC-like"/>
    <property type="match status" value="1"/>
</dbReference>
<reference key="1">
    <citation type="journal article" date="2006" name="J. Bacteriol.">
        <title>Complete genome sequence of Yersinia pestis strains Antiqua and Nepal516: evidence of gene reduction in an emerging pathogen.</title>
        <authorList>
            <person name="Chain P.S.G."/>
            <person name="Hu P."/>
            <person name="Malfatti S.A."/>
            <person name="Radnedge L."/>
            <person name="Larimer F."/>
            <person name="Vergez L.M."/>
            <person name="Worsham P."/>
            <person name="Chu M.C."/>
            <person name="Andersen G.L."/>
        </authorList>
    </citation>
    <scope>NUCLEOTIDE SEQUENCE [LARGE SCALE GENOMIC DNA]</scope>
    <source>
        <strain>Antiqua</strain>
    </source>
</reference>
<keyword id="KW-0997">Cell inner membrane</keyword>
<keyword id="KW-1003">Cell membrane</keyword>
<keyword id="KW-0963">Cytoplasm</keyword>
<keyword id="KW-0472">Membrane</keyword>
<evidence type="ECO:0000255" key="1">
    <source>
        <dbReference type="HAMAP-Rule" id="MF_00695"/>
    </source>
</evidence>
<feature type="chain" id="PRO_1000045456" description="High frequency lysogenization protein HflD homolog">
    <location>
        <begin position="1"/>
        <end position="208"/>
    </location>
</feature>
<organism>
    <name type="scientific">Yersinia pestis bv. Antiqua (strain Antiqua)</name>
    <dbReference type="NCBI Taxonomy" id="360102"/>
    <lineage>
        <taxon>Bacteria</taxon>
        <taxon>Pseudomonadati</taxon>
        <taxon>Pseudomonadota</taxon>
        <taxon>Gammaproteobacteria</taxon>
        <taxon>Enterobacterales</taxon>
        <taxon>Yersiniaceae</taxon>
        <taxon>Yersinia</taxon>
    </lineage>
</organism>
<proteinExistence type="inferred from homology"/>
<name>HFLD_YERPA</name>
<protein>
    <recommendedName>
        <fullName evidence="1">High frequency lysogenization protein HflD homolog</fullName>
    </recommendedName>
</protein>